<gene>
    <name evidence="1" type="primary">engB</name>
    <name type="ordered locus">SGO_1139</name>
</gene>
<proteinExistence type="inferred from homology"/>
<protein>
    <recommendedName>
        <fullName evidence="1">Probable GTP-binding protein EngB</fullName>
    </recommendedName>
</protein>
<organism>
    <name type="scientific">Streptococcus gordonii (strain Challis / ATCC 35105 / BCRC 15272 / CH1 / DL1 / V288)</name>
    <dbReference type="NCBI Taxonomy" id="467705"/>
    <lineage>
        <taxon>Bacteria</taxon>
        <taxon>Bacillati</taxon>
        <taxon>Bacillota</taxon>
        <taxon>Bacilli</taxon>
        <taxon>Lactobacillales</taxon>
        <taxon>Streptococcaceae</taxon>
        <taxon>Streptococcus</taxon>
    </lineage>
</organism>
<dbReference type="EMBL" id="CP000725">
    <property type="protein sequence ID" value="ABV10995.1"/>
    <property type="molecule type" value="Genomic_DNA"/>
</dbReference>
<dbReference type="RefSeq" id="WP_012000548.1">
    <property type="nucleotide sequence ID" value="NC_009785.1"/>
</dbReference>
<dbReference type="SMR" id="A8AXB8"/>
<dbReference type="STRING" id="467705.SGO_1139"/>
<dbReference type="KEGG" id="sgo:SGO_1139"/>
<dbReference type="eggNOG" id="COG0218">
    <property type="taxonomic scope" value="Bacteria"/>
</dbReference>
<dbReference type="HOGENOM" id="CLU_033732_3_0_9"/>
<dbReference type="Proteomes" id="UP000001131">
    <property type="component" value="Chromosome"/>
</dbReference>
<dbReference type="GO" id="GO:0005829">
    <property type="term" value="C:cytosol"/>
    <property type="evidence" value="ECO:0007669"/>
    <property type="project" value="TreeGrafter"/>
</dbReference>
<dbReference type="GO" id="GO:0005525">
    <property type="term" value="F:GTP binding"/>
    <property type="evidence" value="ECO:0007669"/>
    <property type="project" value="UniProtKB-UniRule"/>
</dbReference>
<dbReference type="GO" id="GO:0046872">
    <property type="term" value="F:metal ion binding"/>
    <property type="evidence" value="ECO:0007669"/>
    <property type="project" value="UniProtKB-KW"/>
</dbReference>
<dbReference type="GO" id="GO:0000917">
    <property type="term" value="P:division septum assembly"/>
    <property type="evidence" value="ECO:0007669"/>
    <property type="project" value="UniProtKB-KW"/>
</dbReference>
<dbReference type="CDD" id="cd01876">
    <property type="entry name" value="YihA_EngB"/>
    <property type="match status" value="1"/>
</dbReference>
<dbReference type="FunFam" id="3.40.50.300:FF:000098">
    <property type="entry name" value="Probable GTP-binding protein EngB"/>
    <property type="match status" value="1"/>
</dbReference>
<dbReference type="Gene3D" id="3.40.50.300">
    <property type="entry name" value="P-loop containing nucleotide triphosphate hydrolases"/>
    <property type="match status" value="1"/>
</dbReference>
<dbReference type="HAMAP" id="MF_00321">
    <property type="entry name" value="GTPase_EngB"/>
    <property type="match status" value="1"/>
</dbReference>
<dbReference type="InterPro" id="IPR030393">
    <property type="entry name" value="G_ENGB_dom"/>
</dbReference>
<dbReference type="InterPro" id="IPR006073">
    <property type="entry name" value="GTP-bd"/>
</dbReference>
<dbReference type="InterPro" id="IPR019987">
    <property type="entry name" value="GTP-bd_ribosome_bio_YsxC"/>
</dbReference>
<dbReference type="InterPro" id="IPR027417">
    <property type="entry name" value="P-loop_NTPase"/>
</dbReference>
<dbReference type="NCBIfam" id="TIGR03598">
    <property type="entry name" value="GTPase_YsxC"/>
    <property type="match status" value="1"/>
</dbReference>
<dbReference type="PANTHER" id="PTHR11649:SF13">
    <property type="entry name" value="ENGB-TYPE G DOMAIN-CONTAINING PROTEIN"/>
    <property type="match status" value="1"/>
</dbReference>
<dbReference type="PANTHER" id="PTHR11649">
    <property type="entry name" value="MSS1/TRME-RELATED GTP-BINDING PROTEIN"/>
    <property type="match status" value="1"/>
</dbReference>
<dbReference type="Pfam" id="PF01926">
    <property type="entry name" value="MMR_HSR1"/>
    <property type="match status" value="1"/>
</dbReference>
<dbReference type="SUPFAM" id="SSF52540">
    <property type="entry name" value="P-loop containing nucleoside triphosphate hydrolases"/>
    <property type="match status" value="1"/>
</dbReference>
<dbReference type="PROSITE" id="PS51706">
    <property type="entry name" value="G_ENGB"/>
    <property type="match status" value="1"/>
</dbReference>
<feature type="chain" id="PRO_1000079188" description="Probable GTP-binding protein EngB">
    <location>
        <begin position="1"/>
        <end position="197"/>
    </location>
</feature>
<feature type="domain" description="EngB-type G" evidence="1">
    <location>
        <begin position="24"/>
        <end position="197"/>
    </location>
</feature>
<feature type="binding site" evidence="1">
    <location>
        <begin position="32"/>
        <end position="39"/>
    </location>
    <ligand>
        <name>GTP</name>
        <dbReference type="ChEBI" id="CHEBI:37565"/>
    </ligand>
</feature>
<feature type="binding site" evidence="1">
    <location>
        <position position="39"/>
    </location>
    <ligand>
        <name>Mg(2+)</name>
        <dbReference type="ChEBI" id="CHEBI:18420"/>
    </ligand>
</feature>
<feature type="binding site" evidence="1">
    <location>
        <begin position="59"/>
        <end position="63"/>
    </location>
    <ligand>
        <name>GTP</name>
        <dbReference type="ChEBI" id="CHEBI:37565"/>
    </ligand>
</feature>
<feature type="binding site" evidence="1">
    <location>
        <position position="61"/>
    </location>
    <ligand>
        <name>Mg(2+)</name>
        <dbReference type="ChEBI" id="CHEBI:18420"/>
    </ligand>
</feature>
<feature type="binding site" evidence="1">
    <location>
        <begin position="77"/>
        <end position="80"/>
    </location>
    <ligand>
        <name>GTP</name>
        <dbReference type="ChEBI" id="CHEBI:37565"/>
    </ligand>
</feature>
<feature type="binding site" evidence="1">
    <location>
        <begin position="144"/>
        <end position="147"/>
    </location>
    <ligand>
        <name>GTP</name>
        <dbReference type="ChEBI" id="CHEBI:37565"/>
    </ligand>
</feature>
<feature type="binding site" evidence="1">
    <location>
        <begin position="176"/>
        <end position="178"/>
    </location>
    <ligand>
        <name>GTP</name>
        <dbReference type="ChEBI" id="CHEBI:37565"/>
    </ligand>
</feature>
<comment type="function">
    <text evidence="1">Necessary for normal cell division and for the maintenance of normal septation.</text>
</comment>
<comment type="cofactor">
    <cofactor evidence="1">
        <name>Mg(2+)</name>
        <dbReference type="ChEBI" id="CHEBI:18420"/>
    </cofactor>
</comment>
<comment type="similarity">
    <text evidence="1">Belongs to the TRAFAC class TrmE-Era-EngA-EngB-Septin-like GTPase superfamily. EngB GTPase family.</text>
</comment>
<reference key="1">
    <citation type="journal article" date="2007" name="J. Bacteriol.">
        <title>Genome-wide transcriptional changes in Streptococcus gordonii in response to competence signaling peptide.</title>
        <authorList>
            <person name="Vickerman M.M."/>
            <person name="Iobst S."/>
            <person name="Jesionowski A.M."/>
            <person name="Gill S.R."/>
        </authorList>
    </citation>
    <scope>NUCLEOTIDE SEQUENCE [LARGE SCALE GENOMIC DNA]</scope>
    <source>
        <strain>Challis / ATCC 35105 / BCRC 15272 / CH1 / DL1 / V288</strain>
    </source>
</reference>
<keyword id="KW-0131">Cell cycle</keyword>
<keyword id="KW-0132">Cell division</keyword>
<keyword id="KW-0342">GTP-binding</keyword>
<keyword id="KW-0460">Magnesium</keyword>
<keyword id="KW-0479">Metal-binding</keyword>
<keyword id="KW-0547">Nucleotide-binding</keyword>
<keyword id="KW-1185">Reference proteome</keyword>
<keyword id="KW-0717">Septation</keyword>
<name>ENGB_STRGC</name>
<accession>A8AXB8</accession>
<evidence type="ECO:0000255" key="1">
    <source>
        <dbReference type="HAMAP-Rule" id="MF_00321"/>
    </source>
</evidence>
<sequence>MEINTHNAEILLSAANKSHYPQDDIPEIALAGRSNVGKSSFINTMLNRKNLARTSGKPGKTQLLNFFNIDDKLRFVDVPGYGYAKVSKTERAKWGRMIEEYLTSRENLRAVVSLVDLRHEPSADDVQMYEFLKYYEIPVILVATKADKIPRGKWNKHESAIKKKLNFDQADTFILFSSVDKTGLDASWDAILEKVNK</sequence>